<organismHost>
    <name type="scientific">Acanthamoeba polyphaga</name>
    <name type="common">Amoeba</name>
    <dbReference type="NCBI Taxonomy" id="5757"/>
</organismHost>
<organism>
    <name type="scientific">Acanthamoeba polyphaga mimivirus</name>
    <name type="common">APMV</name>
    <dbReference type="NCBI Taxonomy" id="212035"/>
    <lineage>
        <taxon>Viruses</taxon>
        <taxon>Varidnaviria</taxon>
        <taxon>Bamfordvirae</taxon>
        <taxon>Nucleocytoviricota</taxon>
        <taxon>Megaviricetes</taxon>
        <taxon>Imitervirales</taxon>
        <taxon>Mimiviridae</taxon>
        <taxon>Megamimivirinae</taxon>
        <taxon>Mimivirus</taxon>
        <taxon>Mimivirus bradfordmassiliense</taxon>
    </lineage>
</organism>
<protein>
    <recommendedName>
        <fullName>Uncharacterized protein L823</fullName>
    </recommendedName>
</protein>
<reference key="1">
    <citation type="journal article" date="2004" name="Science">
        <title>The 1.2-megabase genome sequence of Mimivirus.</title>
        <authorList>
            <person name="Raoult D."/>
            <person name="Audic S."/>
            <person name="Robert C."/>
            <person name="Abergel C."/>
            <person name="Renesto P."/>
            <person name="Ogata H."/>
            <person name="La Scola B."/>
            <person name="Susan M."/>
            <person name="Claverie J.-M."/>
        </authorList>
    </citation>
    <scope>NUCLEOTIDE SEQUENCE [LARGE SCALE GENOMIC DNA]</scope>
    <source>
        <strain>Rowbotham-Bradford</strain>
    </source>
</reference>
<keyword id="KW-0449">Lipoprotein</keyword>
<keyword id="KW-0519">Myristate</keyword>
<keyword id="KW-1185">Reference proteome</keyword>
<dbReference type="EMBL" id="AY653733">
    <property type="protein sequence ID" value="AAV51083.1"/>
    <property type="molecule type" value="Genomic_DNA"/>
</dbReference>
<dbReference type="SMR" id="Q5UQH4"/>
<dbReference type="KEGG" id="vg:9925486"/>
<dbReference type="OrthoDB" id="139at10501"/>
<dbReference type="Proteomes" id="UP000001134">
    <property type="component" value="Genome"/>
</dbReference>
<dbReference type="GO" id="GO:0003677">
    <property type="term" value="F:DNA binding"/>
    <property type="evidence" value="ECO:0007669"/>
    <property type="project" value="InterPro"/>
</dbReference>
<dbReference type="GO" id="GO:0030337">
    <property type="term" value="F:DNA polymerase processivity factor activity"/>
    <property type="evidence" value="ECO:0007669"/>
    <property type="project" value="InterPro"/>
</dbReference>
<dbReference type="GO" id="GO:0006272">
    <property type="term" value="P:leading strand elongation"/>
    <property type="evidence" value="ECO:0007669"/>
    <property type="project" value="TreeGrafter"/>
</dbReference>
<dbReference type="GO" id="GO:0006275">
    <property type="term" value="P:regulation of DNA replication"/>
    <property type="evidence" value="ECO:0007669"/>
    <property type="project" value="InterPro"/>
</dbReference>
<dbReference type="Gene3D" id="3.70.10.10">
    <property type="match status" value="1"/>
</dbReference>
<dbReference type="InterPro" id="IPR046938">
    <property type="entry name" value="DNA_clamp_sf"/>
</dbReference>
<dbReference type="InterPro" id="IPR000730">
    <property type="entry name" value="Pr_cel_nuc_antig"/>
</dbReference>
<dbReference type="PANTHER" id="PTHR11352">
    <property type="entry name" value="PROLIFERATING CELL NUCLEAR ANTIGEN"/>
    <property type="match status" value="1"/>
</dbReference>
<dbReference type="PANTHER" id="PTHR11352:SF0">
    <property type="entry name" value="PROLIFERATING CELL NUCLEAR ANTIGEN"/>
    <property type="match status" value="1"/>
</dbReference>
<dbReference type="SUPFAM" id="SSF55979">
    <property type="entry name" value="DNA clamp"/>
    <property type="match status" value="2"/>
</dbReference>
<evidence type="ECO:0000255" key="1"/>
<evidence type="ECO:0000256" key="2">
    <source>
        <dbReference type="SAM" id="MobiDB-lite"/>
    </source>
</evidence>
<proteinExistence type="inferred from homology"/>
<sequence>MGSYYSTESTKSNESNETTNNVEGIVDTIGGTVESINSDGIITTSENIVEIVLKENNQPTIFETQESNILEIVTTKIDVLKKILRLIGEVTSECQFSFQNVNEGGRIIVTELHDNKTILLKLVLKGTGFDFYKCSKSKITARLYLPDIDEALGLIGVDDTNTNPIIISMKKDKETSIFITRIDNSGFTEQVELPCRESVGLNIPLPKTTFQGKIVINAEKFRKICERICSVSDLIKISLTDKEVSFSARYYNLDFRYKHSVESKVLGQTIENYFFIDGMLKFIKYFQSSDEISIYIKKDFPLVIHGPFDNFGSIYVFTSPIEE</sequence>
<gene>
    <name type="ordered locus">MIMI_L823</name>
</gene>
<feature type="initiator methionine" description="Removed" evidence="1">
    <location>
        <position position="1"/>
    </location>
</feature>
<feature type="chain" id="PRO_0000253296" description="Uncharacterized protein L823">
    <location>
        <begin position="2"/>
        <end position="323"/>
    </location>
</feature>
<feature type="region of interest" description="Disordered" evidence="2">
    <location>
        <begin position="1"/>
        <end position="21"/>
    </location>
</feature>
<feature type="lipid moiety-binding region" description="N-myristoyl glycine; by host" evidence="1">
    <location>
        <position position="2"/>
    </location>
</feature>
<accession>Q5UQH4</accession>
<name>YL823_MIMIV</name>